<organism>
    <name type="scientific">Pseudoalteromonas atlantica (strain T6c / ATCC BAA-1087)</name>
    <dbReference type="NCBI Taxonomy" id="3042615"/>
    <lineage>
        <taxon>Bacteria</taxon>
        <taxon>Pseudomonadati</taxon>
        <taxon>Pseudomonadota</taxon>
        <taxon>Gammaproteobacteria</taxon>
        <taxon>Alteromonadales</taxon>
        <taxon>Alteromonadaceae</taxon>
        <taxon>Paraglaciecola</taxon>
    </lineage>
</organism>
<evidence type="ECO:0000255" key="1">
    <source>
        <dbReference type="HAMAP-Rule" id="MF_00145"/>
    </source>
</evidence>
<name>PGK_PSEA6</name>
<accession>Q15QK4</accession>
<proteinExistence type="inferred from homology"/>
<sequence length="391" mass="40671">MSIINMTDLDLAGKRVLIRQDLNVPVKGGKVTSDARIKASLGTLKHALEAGAKVMVMSHLGRPTEGEYDSAFSLQPVVDYLNDVLECSVSLASDYLNGVDVKAGELVVLENVRFNVGEKKDDEALSKQYAALCDVYVMDAFGTAHRAQASTHGAGKFAPVACAGPLLAGELEALGKALHNPARPMLAIVGGSKVSTKLTVLESLSNKVDQLIVGGGIANTFIAATGNNVGKSLYEADLIPEANRLLAAAKDAGGNIPVPVDVVTGKEFSEQAQATLKAVSDVADDDMIFDIGPQTATELAELIKNAGTIVWNGPVGVFEFDQFGEGTKAIAMAIAQSNAFSIAGGGDTLAAVDKYGIEDKISYISTGGGAFLEFLEGKALPAVTMLEARGA</sequence>
<protein>
    <recommendedName>
        <fullName evidence="1">Phosphoglycerate kinase</fullName>
        <ecNumber evidence="1">2.7.2.3</ecNumber>
    </recommendedName>
</protein>
<feature type="chain" id="PRO_1000058034" description="Phosphoglycerate kinase">
    <location>
        <begin position="1"/>
        <end position="391"/>
    </location>
</feature>
<feature type="binding site" evidence="1">
    <location>
        <begin position="21"/>
        <end position="23"/>
    </location>
    <ligand>
        <name>substrate</name>
    </ligand>
</feature>
<feature type="binding site" evidence="1">
    <location>
        <position position="36"/>
    </location>
    <ligand>
        <name>substrate</name>
    </ligand>
</feature>
<feature type="binding site" evidence="1">
    <location>
        <begin position="59"/>
        <end position="62"/>
    </location>
    <ligand>
        <name>substrate</name>
    </ligand>
</feature>
<feature type="binding site" evidence="1">
    <location>
        <position position="113"/>
    </location>
    <ligand>
        <name>substrate</name>
    </ligand>
</feature>
<feature type="binding site" evidence="1">
    <location>
        <position position="146"/>
    </location>
    <ligand>
        <name>substrate</name>
    </ligand>
</feature>
<feature type="binding site" evidence="1">
    <location>
        <position position="197"/>
    </location>
    <ligand>
        <name>ATP</name>
        <dbReference type="ChEBI" id="CHEBI:30616"/>
    </ligand>
</feature>
<feature type="binding site" evidence="1">
    <location>
        <position position="319"/>
    </location>
    <ligand>
        <name>ATP</name>
        <dbReference type="ChEBI" id="CHEBI:30616"/>
    </ligand>
</feature>
<feature type="binding site" evidence="1">
    <location>
        <begin position="345"/>
        <end position="348"/>
    </location>
    <ligand>
        <name>ATP</name>
        <dbReference type="ChEBI" id="CHEBI:30616"/>
    </ligand>
</feature>
<gene>
    <name evidence="1" type="primary">pgk</name>
    <name type="ordered locus">Patl_3328</name>
</gene>
<comment type="catalytic activity">
    <reaction evidence="1">
        <text>(2R)-3-phosphoglycerate + ATP = (2R)-3-phospho-glyceroyl phosphate + ADP</text>
        <dbReference type="Rhea" id="RHEA:14801"/>
        <dbReference type="ChEBI" id="CHEBI:30616"/>
        <dbReference type="ChEBI" id="CHEBI:57604"/>
        <dbReference type="ChEBI" id="CHEBI:58272"/>
        <dbReference type="ChEBI" id="CHEBI:456216"/>
        <dbReference type="EC" id="2.7.2.3"/>
    </reaction>
</comment>
<comment type="pathway">
    <text evidence="1">Carbohydrate degradation; glycolysis; pyruvate from D-glyceraldehyde 3-phosphate: step 2/5.</text>
</comment>
<comment type="subunit">
    <text evidence="1">Monomer.</text>
</comment>
<comment type="subcellular location">
    <subcellularLocation>
        <location evidence="1">Cytoplasm</location>
    </subcellularLocation>
</comment>
<comment type="similarity">
    <text evidence="1">Belongs to the phosphoglycerate kinase family.</text>
</comment>
<keyword id="KW-0067">ATP-binding</keyword>
<keyword id="KW-0963">Cytoplasm</keyword>
<keyword id="KW-0324">Glycolysis</keyword>
<keyword id="KW-0418">Kinase</keyword>
<keyword id="KW-0547">Nucleotide-binding</keyword>
<keyword id="KW-0808">Transferase</keyword>
<reference key="1">
    <citation type="submission" date="2006-06" db="EMBL/GenBank/DDBJ databases">
        <title>Complete sequence of Pseudoalteromonas atlantica T6c.</title>
        <authorList>
            <consortium name="US DOE Joint Genome Institute"/>
            <person name="Copeland A."/>
            <person name="Lucas S."/>
            <person name="Lapidus A."/>
            <person name="Barry K."/>
            <person name="Detter J.C."/>
            <person name="Glavina del Rio T."/>
            <person name="Hammon N."/>
            <person name="Israni S."/>
            <person name="Dalin E."/>
            <person name="Tice H."/>
            <person name="Pitluck S."/>
            <person name="Saunders E."/>
            <person name="Brettin T."/>
            <person name="Bruce D."/>
            <person name="Han C."/>
            <person name="Tapia R."/>
            <person name="Gilna P."/>
            <person name="Schmutz J."/>
            <person name="Larimer F."/>
            <person name="Land M."/>
            <person name="Hauser L."/>
            <person name="Kyrpides N."/>
            <person name="Kim E."/>
            <person name="Karls A.C."/>
            <person name="Bartlett D."/>
            <person name="Higgins B.P."/>
            <person name="Richardson P."/>
        </authorList>
    </citation>
    <scope>NUCLEOTIDE SEQUENCE [LARGE SCALE GENOMIC DNA]</scope>
    <source>
        <strain>T6c / ATCC BAA-1087</strain>
    </source>
</reference>
<dbReference type="EC" id="2.7.2.3" evidence="1"/>
<dbReference type="EMBL" id="CP000388">
    <property type="protein sequence ID" value="ABG41834.1"/>
    <property type="molecule type" value="Genomic_DNA"/>
</dbReference>
<dbReference type="RefSeq" id="WP_011576064.1">
    <property type="nucleotide sequence ID" value="NC_008228.1"/>
</dbReference>
<dbReference type="SMR" id="Q15QK4"/>
<dbReference type="STRING" id="342610.Patl_3328"/>
<dbReference type="KEGG" id="pat:Patl_3328"/>
<dbReference type="eggNOG" id="COG0126">
    <property type="taxonomic scope" value="Bacteria"/>
</dbReference>
<dbReference type="HOGENOM" id="CLU_025427_0_2_6"/>
<dbReference type="OrthoDB" id="9808460at2"/>
<dbReference type="UniPathway" id="UPA00109">
    <property type="reaction ID" value="UER00185"/>
</dbReference>
<dbReference type="Proteomes" id="UP000001981">
    <property type="component" value="Chromosome"/>
</dbReference>
<dbReference type="GO" id="GO:0005829">
    <property type="term" value="C:cytosol"/>
    <property type="evidence" value="ECO:0007669"/>
    <property type="project" value="TreeGrafter"/>
</dbReference>
<dbReference type="GO" id="GO:0043531">
    <property type="term" value="F:ADP binding"/>
    <property type="evidence" value="ECO:0007669"/>
    <property type="project" value="TreeGrafter"/>
</dbReference>
<dbReference type="GO" id="GO:0005524">
    <property type="term" value="F:ATP binding"/>
    <property type="evidence" value="ECO:0007669"/>
    <property type="project" value="UniProtKB-KW"/>
</dbReference>
<dbReference type="GO" id="GO:0004618">
    <property type="term" value="F:phosphoglycerate kinase activity"/>
    <property type="evidence" value="ECO:0007669"/>
    <property type="project" value="UniProtKB-UniRule"/>
</dbReference>
<dbReference type="GO" id="GO:0006094">
    <property type="term" value="P:gluconeogenesis"/>
    <property type="evidence" value="ECO:0007669"/>
    <property type="project" value="TreeGrafter"/>
</dbReference>
<dbReference type="GO" id="GO:0006096">
    <property type="term" value="P:glycolytic process"/>
    <property type="evidence" value="ECO:0007669"/>
    <property type="project" value="UniProtKB-UniRule"/>
</dbReference>
<dbReference type="FunFam" id="3.40.50.1260:FF:000001">
    <property type="entry name" value="Phosphoglycerate kinase"/>
    <property type="match status" value="1"/>
</dbReference>
<dbReference type="FunFam" id="3.40.50.1260:FF:000002">
    <property type="entry name" value="Phosphoglycerate kinase"/>
    <property type="match status" value="1"/>
</dbReference>
<dbReference type="Gene3D" id="3.40.50.1260">
    <property type="entry name" value="Phosphoglycerate kinase, N-terminal domain"/>
    <property type="match status" value="2"/>
</dbReference>
<dbReference type="HAMAP" id="MF_00145">
    <property type="entry name" value="Phosphoglyc_kinase"/>
    <property type="match status" value="1"/>
</dbReference>
<dbReference type="InterPro" id="IPR001576">
    <property type="entry name" value="Phosphoglycerate_kinase"/>
</dbReference>
<dbReference type="InterPro" id="IPR015911">
    <property type="entry name" value="Phosphoglycerate_kinase_CS"/>
</dbReference>
<dbReference type="InterPro" id="IPR015824">
    <property type="entry name" value="Phosphoglycerate_kinase_N"/>
</dbReference>
<dbReference type="InterPro" id="IPR036043">
    <property type="entry name" value="Phosphoglycerate_kinase_sf"/>
</dbReference>
<dbReference type="PANTHER" id="PTHR11406">
    <property type="entry name" value="PHOSPHOGLYCERATE KINASE"/>
    <property type="match status" value="1"/>
</dbReference>
<dbReference type="PANTHER" id="PTHR11406:SF23">
    <property type="entry name" value="PHOSPHOGLYCERATE KINASE 1, CHLOROPLASTIC-RELATED"/>
    <property type="match status" value="1"/>
</dbReference>
<dbReference type="Pfam" id="PF00162">
    <property type="entry name" value="PGK"/>
    <property type="match status" value="1"/>
</dbReference>
<dbReference type="PIRSF" id="PIRSF000724">
    <property type="entry name" value="Pgk"/>
    <property type="match status" value="1"/>
</dbReference>
<dbReference type="PRINTS" id="PR00477">
    <property type="entry name" value="PHGLYCKINASE"/>
</dbReference>
<dbReference type="SUPFAM" id="SSF53748">
    <property type="entry name" value="Phosphoglycerate kinase"/>
    <property type="match status" value="1"/>
</dbReference>
<dbReference type="PROSITE" id="PS00111">
    <property type="entry name" value="PGLYCERATE_KINASE"/>
    <property type="match status" value="1"/>
</dbReference>